<name>ALR_SHEPW</name>
<feature type="chain" id="PRO_1000164619" description="Alanine racemase">
    <location>
        <begin position="1"/>
        <end position="358"/>
    </location>
</feature>
<feature type="active site" description="Proton acceptor; specific for D-alanine" evidence="1">
    <location>
        <position position="35"/>
    </location>
</feature>
<feature type="active site" description="Proton acceptor; specific for L-alanine" evidence="1">
    <location>
        <position position="255"/>
    </location>
</feature>
<feature type="binding site" evidence="1">
    <location>
        <position position="130"/>
    </location>
    <ligand>
        <name>substrate</name>
    </ligand>
</feature>
<feature type="binding site" evidence="1">
    <location>
        <position position="303"/>
    </location>
    <ligand>
        <name>substrate</name>
    </ligand>
</feature>
<feature type="modified residue" description="N6-(pyridoxal phosphate)lysine" evidence="1">
    <location>
        <position position="35"/>
    </location>
</feature>
<organism>
    <name type="scientific">Shewanella piezotolerans (strain WP3 / JCM 13877)</name>
    <dbReference type="NCBI Taxonomy" id="225849"/>
    <lineage>
        <taxon>Bacteria</taxon>
        <taxon>Pseudomonadati</taxon>
        <taxon>Pseudomonadota</taxon>
        <taxon>Gammaproteobacteria</taxon>
        <taxon>Alteromonadales</taxon>
        <taxon>Shewanellaceae</taxon>
        <taxon>Shewanella</taxon>
    </lineage>
</organism>
<protein>
    <recommendedName>
        <fullName evidence="1">Alanine racemase</fullName>
        <ecNumber evidence="1">5.1.1.1</ecNumber>
    </recommendedName>
</protein>
<reference key="1">
    <citation type="journal article" date="2008" name="PLoS ONE">
        <title>Environmental adaptation: genomic analysis of the piezotolerant and psychrotolerant deep-sea iron reducing bacterium Shewanella piezotolerans WP3.</title>
        <authorList>
            <person name="Wang F."/>
            <person name="Wang J."/>
            <person name="Jian H."/>
            <person name="Zhang B."/>
            <person name="Li S."/>
            <person name="Wang F."/>
            <person name="Zeng X."/>
            <person name="Gao L."/>
            <person name="Bartlett D.H."/>
            <person name="Yu J."/>
            <person name="Hu S."/>
            <person name="Xiao X."/>
        </authorList>
    </citation>
    <scope>NUCLEOTIDE SEQUENCE [LARGE SCALE GENOMIC DNA]</scope>
    <source>
        <strain>WP3 / JCM 13877</strain>
    </source>
</reference>
<sequence length="358" mass="38745">MKPFPRAEISRKALKHNLARLHELAPSSKVMAVVKANGYGHGLLNVAQCLDNADGFGLARLEEALALRTGGVTAKLLLLEGFFRIGDLTTLVEHDIETVVHHESQLEMLESINLTKPVTVWLKVDSGMHRLGFSPAQFDATYQRLMANDNVAKPIHLMTHFACADEPSNPSTAEQQRVFDTLIKGLPGDRTLANSAGALFWQQSQADWIRPGIALYGVSPVFGDLGAKHGLMPAMDLVSQLIAIREHKAGESAGYGSYWTAEKDTNLGVVAIGYGDGYPRNAPLGTPVLVNGRIVPIVGRVSMDMLTVDLGIDANDKVGDLAVLWGKELPVEEVAEHIGTIAYELVTKLTPRVAVCLD</sequence>
<dbReference type="EC" id="5.1.1.1" evidence="1"/>
<dbReference type="EMBL" id="CP000472">
    <property type="protein sequence ID" value="ACJ27535.1"/>
    <property type="molecule type" value="Genomic_DNA"/>
</dbReference>
<dbReference type="RefSeq" id="WP_020910915.1">
    <property type="nucleotide sequence ID" value="NC_011566.1"/>
</dbReference>
<dbReference type="SMR" id="B8CIQ9"/>
<dbReference type="STRING" id="225849.swp_0719"/>
<dbReference type="KEGG" id="swp:swp_0719"/>
<dbReference type="eggNOG" id="COG0787">
    <property type="taxonomic scope" value="Bacteria"/>
</dbReference>
<dbReference type="HOGENOM" id="CLU_028393_1_0_6"/>
<dbReference type="OrthoDB" id="9813814at2"/>
<dbReference type="UniPathway" id="UPA00042">
    <property type="reaction ID" value="UER00497"/>
</dbReference>
<dbReference type="Proteomes" id="UP000000753">
    <property type="component" value="Chromosome"/>
</dbReference>
<dbReference type="GO" id="GO:0005829">
    <property type="term" value="C:cytosol"/>
    <property type="evidence" value="ECO:0007669"/>
    <property type="project" value="TreeGrafter"/>
</dbReference>
<dbReference type="GO" id="GO:0008784">
    <property type="term" value="F:alanine racemase activity"/>
    <property type="evidence" value="ECO:0007669"/>
    <property type="project" value="UniProtKB-UniRule"/>
</dbReference>
<dbReference type="GO" id="GO:0030170">
    <property type="term" value="F:pyridoxal phosphate binding"/>
    <property type="evidence" value="ECO:0007669"/>
    <property type="project" value="UniProtKB-UniRule"/>
</dbReference>
<dbReference type="GO" id="GO:0030632">
    <property type="term" value="P:D-alanine biosynthetic process"/>
    <property type="evidence" value="ECO:0007669"/>
    <property type="project" value="UniProtKB-UniRule"/>
</dbReference>
<dbReference type="CDD" id="cd06827">
    <property type="entry name" value="PLPDE_III_AR_proteobact"/>
    <property type="match status" value="1"/>
</dbReference>
<dbReference type="FunFam" id="2.40.37.10:FF:000002">
    <property type="entry name" value="Alanine racemase"/>
    <property type="match status" value="1"/>
</dbReference>
<dbReference type="FunFam" id="3.20.20.10:FF:000002">
    <property type="entry name" value="Alanine racemase"/>
    <property type="match status" value="1"/>
</dbReference>
<dbReference type="Gene3D" id="3.20.20.10">
    <property type="entry name" value="Alanine racemase"/>
    <property type="match status" value="1"/>
</dbReference>
<dbReference type="Gene3D" id="2.40.37.10">
    <property type="entry name" value="Lyase, Ornithine Decarboxylase, Chain A, domain 1"/>
    <property type="match status" value="1"/>
</dbReference>
<dbReference type="HAMAP" id="MF_01201">
    <property type="entry name" value="Ala_racemase"/>
    <property type="match status" value="1"/>
</dbReference>
<dbReference type="InterPro" id="IPR000821">
    <property type="entry name" value="Ala_racemase"/>
</dbReference>
<dbReference type="InterPro" id="IPR009006">
    <property type="entry name" value="Ala_racemase/Decarboxylase_C"/>
</dbReference>
<dbReference type="InterPro" id="IPR011079">
    <property type="entry name" value="Ala_racemase_C"/>
</dbReference>
<dbReference type="InterPro" id="IPR001608">
    <property type="entry name" value="Ala_racemase_N"/>
</dbReference>
<dbReference type="InterPro" id="IPR020622">
    <property type="entry name" value="Ala_racemase_pyridoxalP-BS"/>
</dbReference>
<dbReference type="InterPro" id="IPR029066">
    <property type="entry name" value="PLP-binding_barrel"/>
</dbReference>
<dbReference type="NCBIfam" id="TIGR00492">
    <property type="entry name" value="alr"/>
    <property type="match status" value="1"/>
</dbReference>
<dbReference type="PANTHER" id="PTHR30511">
    <property type="entry name" value="ALANINE RACEMASE"/>
    <property type="match status" value="1"/>
</dbReference>
<dbReference type="PANTHER" id="PTHR30511:SF4">
    <property type="entry name" value="ALANINE RACEMASE, BIOSYNTHETIC"/>
    <property type="match status" value="1"/>
</dbReference>
<dbReference type="Pfam" id="PF00842">
    <property type="entry name" value="Ala_racemase_C"/>
    <property type="match status" value="1"/>
</dbReference>
<dbReference type="Pfam" id="PF01168">
    <property type="entry name" value="Ala_racemase_N"/>
    <property type="match status" value="1"/>
</dbReference>
<dbReference type="PRINTS" id="PR00992">
    <property type="entry name" value="ALARACEMASE"/>
</dbReference>
<dbReference type="SMART" id="SM01005">
    <property type="entry name" value="Ala_racemase_C"/>
    <property type="match status" value="1"/>
</dbReference>
<dbReference type="SUPFAM" id="SSF50621">
    <property type="entry name" value="Alanine racemase C-terminal domain-like"/>
    <property type="match status" value="1"/>
</dbReference>
<dbReference type="SUPFAM" id="SSF51419">
    <property type="entry name" value="PLP-binding barrel"/>
    <property type="match status" value="1"/>
</dbReference>
<dbReference type="PROSITE" id="PS00395">
    <property type="entry name" value="ALANINE_RACEMASE"/>
    <property type="match status" value="1"/>
</dbReference>
<keyword id="KW-0413">Isomerase</keyword>
<keyword id="KW-0663">Pyridoxal phosphate</keyword>
<evidence type="ECO:0000255" key="1">
    <source>
        <dbReference type="HAMAP-Rule" id="MF_01201"/>
    </source>
</evidence>
<gene>
    <name type="primary">alr</name>
    <name type="ordered locus">swp_0719</name>
</gene>
<proteinExistence type="inferred from homology"/>
<accession>B8CIQ9</accession>
<comment type="function">
    <text evidence="1">Catalyzes the interconversion of L-alanine and D-alanine. May also act on other amino acids.</text>
</comment>
<comment type="catalytic activity">
    <reaction evidence="1">
        <text>L-alanine = D-alanine</text>
        <dbReference type="Rhea" id="RHEA:20249"/>
        <dbReference type="ChEBI" id="CHEBI:57416"/>
        <dbReference type="ChEBI" id="CHEBI:57972"/>
        <dbReference type="EC" id="5.1.1.1"/>
    </reaction>
</comment>
<comment type="cofactor">
    <cofactor evidence="1">
        <name>pyridoxal 5'-phosphate</name>
        <dbReference type="ChEBI" id="CHEBI:597326"/>
    </cofactor>
</comment>
<comment type="pathway">
    <text evidence="1">Amino-acid biosynthesis; D-alanine biosynthesis; D-alanine from L-alanine: step 1/1.</text>
</comment>
<comment type="similarity">
    <text evidence="1">Belongs to the alanine racemase family.</text>
</comment>